<organism>
    <name type="scientific">Streptomyces coelicolor (strain ATCC BAA-471 / A3(2) / M145)</name>
    <dbReference type="NCBI Taxonomy" id="100226"/>
    <lineage>
        <taxon>Bacteria</taxon>
        <taxon>Bacillati</taxon>
        <taxon>Actinomycetota</taxon>
        <taxon>Actinomycetes</taxon>
        <taxon>Kitasatosporales</taxon>
        <taxon>Streptomycetaceae</taxon>
        <taxon>Streptomyces</taxon>
        <taxon>Streptomyces albidoflavus group</taxon>
    </lineage>
</organism>
<comment type="function">
    <text evidence="1">Removes the formyl group from the N-terminal Met of newly synthesized proteins. Requires at least a dipeptide for an efficient rate of reaction. N-terminal L-methionine is a prerequisite for activity but the enzyme has broad specificity at other positions.</text>
</comment>
<comment type="catalytic activity">
    <reaction evidence="1">
        <text>N-terminal N-formyl-L-methionyl-[peptide] + H2O = N-terminal L-methionyl-[peptide] + formate</text>
        <dbReference type="Rhea" id="RHEA:24420"/>
        <dbReference type="Rhea" id="RHEA-COMP:10639"/>
        <dbReference type="Rhea" id="RHEA-COMP:10640"/>
        <dbReference type="ChEBI" id="CHEBI:15377"/>
        <dbReference type="ChEBI" id="CHEBI:15740"/>
        <dbReference type="ChEBI" id="CHEBI:49298"/>
        <dbReference type="ChEBI" id="CHEBI:64731"/>
        <dbReference type="EC" id="3.5.1.88"/>
    </reaction>
</comment>
<comment type="cofactor">
    <cofactor evidence="1">
        <name>Fe(2+)</name>
        <dbReference type="ChEBI" id="CHEBI:29033"/>
    </cofactor>
    <text evidence="1">Binds 1 Fe(2+) ion.</text>
</comment>
<comment type="similarity">
    <text evidence="1">Belongs to the polypeptide deformylase family.</text>
</comment>
<feature type="chain" id="PRO_0000082854" description="Peptide deformylase 3">
    <location>
        <begin position="1"/>
        <end position="208"/>
    </location>
</feature>
<feature type="active site" evidence="1">
    <location>
        <position position="163"/>
    </location>
</feature>
<feature type="binding site" evidence="1">
    <location>
        <position position="120"/>
    </location>
    <ligand>
        <name>Fe cation</name>
        <dbReference type="ChEBI" id="CHEBI:24875"/>
    </ligand>
</feature>
<feature type="binding site" evidence="1">
    <location>
        <position position="162"/>
    </location>
    <ligand>
        <name>Fe cation</name>
        <dbReference type="ChEBI" id="CHEBI:24875"/>
    </ligand>
</feature>
<feature type="binding site" evidence="1">
    <location>
        <position position="166"/>
    </location>
    <ligand>
        <name>Fe cation</name>
        <dbReference type="ChEBI" id="CHEBI:24875"/>
    </ligand>
</feature>
<name>DEF3_STRCO</name>
<sequence length="208" mass="22514">MPSVFVQGRPTASYPPFAPEAGRGAVRRVTEVGEEVLHRPCRDVTEFGPDLAALIDDMFRTMYVAEGAGLAANQVGVDLRLFVYDCPDDEGVRHVGHLVNPVLDALDPAARRLLDEGEGCLSVPGAVMAVPRPDRAVVRGLDKDGVPLLVEGTGYFARCLAHETDHVNGHVYLDRLSGRERKAALRQSADRREEVFARRAANAAAFAA</sequence>
<proteinExistence type="inferred from homology"/>
<gene>
    <name evidence="1" type="primary">def3</name>
    <name type="ordered locus">SCO4560</name>
    <name type="ORF">SCD16A.23</name>
</gene>
<evidence type="ECO:0000255" key="1">
    <source>
        <dbReference type="HAMAP-Rule" id="MF_00163"/>
    </source>
</evidence>
<reference key="1">
    <citation type="journal article" date="2002" name="Nature">
        <title>Complete genome sequence of the model actinomycete Streptomyces coelicolor A3(2).</title>
        <authorList>
            <person name="Bentley S.D."/>
            <person name="Chater K.F."/>
            <person name="Cerdeno-Tarraga A.-M."/>
            <person name="Challis G.L."/>
            <person name="Thomson N.R."/>
            <person name="James K.D."/>
            <person name="Harris D.E."/>
            <person name="Quail M.A."/>
            <person name="Kieser H."/>
            <person name="Harper D."/>
            <person name="Bateman A."/>
            <person name="Brown S."/>
            <person name="Chandra G."/>
            <person name="Chen C.W."/>
            <person name="Collins M."/>
            <person name="Cronin A."/>
            <person name="Fraser A."/>
            <person name="Goble A."/>
            <person name="Hidalgo J."/>
            <person name="Hornsby T."/>
            <person name="Howarth S."/>
            <person name="Huang C.-H."/>
            <person name="Kieser T."/>
            <person name="Larke L."/>
            <person name="Murphy L.D."/>
            <person name="Oliver K."/>
            <person name="O'Neil S."/>
            <person name="Rabbinowitsch E."/>
            <person name="Rajandream M.A."/>
            <person name="Rutherford K.M."/>
            <person name="Rutter S."/>
            <person name="Seeger K."/>
            <person name="Saunders D."/>
            <person name="Sharp S."/>
            <person name="Squares R."/>
            <person name="Squares S."/>
            <person name="Taylor K."/>
            <person name="Warren T."/>
            <person name="Wietzorrek A."/>
            <person name="Woodward J.R."/>
            <person name="Barrell B.G."/>
            <person name="Parkhill J."/>
            <person name="Hopwood D.A."/>
        </authorList>
    </citation>
    <scope>NUCLEOTIDE SEQUENCE [LARGE SCALE GENOMIC DNA]</scope>
    <source>
        <strain>ATCC BAA-471 / A3(2) / M145</strain>
    </source>
</reference>
<dbReference type="EC" id="3.5.1.88" evidence="1"/>
<dbReference type="EMBL" id="AL939120">
    <property type="protein sequence ID" value="CAB44533.1"/>
    <property type="molecule type" value="Genomic_DNA"/>
</dbReference>
<dbReference type="PIR" id="T34626">
    <property type="entry name" value="T34626"/>
</dbReference>
<dbReference type="RefSeq" id="NP_628722.1">
    <property type="nucleotide sequence ID" value="NC_003888.3"/>
</dbReference>
<dbReference type="SMR" id="Q9XAQ2"/>
<dbReference type="FunCoup" id="Q9XAQ2">
    <property type="interactions" value="197"/>
</dbReference>
<dbReference type="STRING" id="100226.gene:17762205"/>
<dbReference type="PaxDb" id="100226-SCO4560"/>
<dbReference type="KEGG" id="sco:SCO4560"/>
<dbReference type="PATRIC" id="fig|100226.15.peg.4632"/>
<dbReference type="eggNOG" id="COG0242">
    <property type="taxonomic scope" value="Bacteria"/>
</dbReference>
<dbReference type="HOGENOM" id="CLU_061901_1_0_11"/>
<dbReference type="InParanoid" id="Q9XAQ2"/>
<dbReference type="OrthoDB" id="9804313at2"/>
<dbReference type="PhylomeDB" id="Q9XAQ2"/>
<dbReference type="Proteomes" id="UP000001973">
    <property type="component" value="Chromosome"/>
</dbReference>
<dbReference type="GO" id="GO:0046872">
    <property type="term" value="F:metal ion binding"/>
    <property type="evidence" value="ECO:0007669"/>
    <property type="project" value="UniProtKB-KW"/>
</dbReference>
<dbReference type="GO" id="GO:0042586">
    <property type="term" value="F:peptide deformylase activity"/>
    <property type="evidence" value="ECO:0000318"/>
    <property type="project" value="GO_Central"/>
</dbReference>
<dbReference type="GO" id="GO:0043686">
    <property type="term" value="P:co-translational protein modification"/>
    <property type="evidence" value="ECO:0000318"/>
    <property type="project" value="GO_Central"/>
</dbReference>
<dbReference type="GO" id="GO:0006412">
    <property type="term" value="P:translation"/>
    <property type="evidence" value="ECO:0007669"/>
    <property type="project" value="UniProtKB-UniRule"/>
</dbReference>
<dbReference type="CDD" id="cd00487">
    <property type="entry name" value="Pep_deformylase"/>
    <property type="match status" value="1"/>
</dbReference>
<dbReference type="FunFam" id="3.90.45.10:FF:000004">
    <property type="entry name" value="Peptide deformylase"/>
    <property type="match status" value="1"/>
</dbReference>
<dbReference type="Gene3D" id="3.90.45.10">
    <property type="entry name" value="Peptide deformylase"/>
    <property type="match status" value="1"/>
</dbReference>
<dbReference type="HAMAP" id="MF_00163">
    <property type="entry name" value="Pep_deformylase"/>
    <property type="match status" value="1"/>
</dbReference>
<dbReference type="InterPro" id="IPR023635">
    <property type="entry name" value="Peptide_deformylase"/>
</dbReference>
<dbReference type="InterPro" id="IPR036821">
    <property type="entry name" value="Peptide_deformylase_sf"/>
</dbReference>
<dbReference type="NCBIfam" id="TIGR00079">
    <property type="entry name" value="pept_deformyl"/>
    <property type="match status" value="1"/>
</dbReference>
<dbReference type="NCBIfam" id="NF001159">
    <property type="entry name" value="PRK00150.1-3"/>
    <property type="match status" value="1"/>
</dbReference>
<dbReference type="PANTHER" id="PTHR10458">
    <property type="entry name" value="PEPTIDE DEFORMYLASE"/>
    <property type="match status" value="1"/>
</dbReference>
<dbReference type="PANTHER" id="PTHR10458:SF2">
    <property type="entry name" value="PEPTIDE DEFORMYLASE, MITOCHONDRIAL"/>
    <property type="match status" value="1"/>
</dbReference>
<dbReference type="Pfam" id="PF01327">
    <property type="entry name" value="Pep_deformylase"/>
    <property type="match status" value="1"/>
</dbReference>
<dbReference type="PRINTS" id="PR01576">
    <property type="entry name" value="PDEFORMYLASE"/>
</dbReference>
<dbReference type="SUPFAM" id="SSF56420">
    <property type="entry name" value="Peptide deformylase"/>
    <property type="match status" value="1"/>
</dbReference>
<protein>
    <recommendedName>
        <fullName evidence="1">Peptide deformylase 3</fullName>
        <shortName evidence="1">PDF 3</shortName>
        <ecNumber evidence="1">3.5.1.88</ecNumber>
    </recommendedName>
    <alternativeName>
        <fullName evidence="1">Polypeptide deformylase 3</fullName>
    </alternativeName>
</protein>
<keyword id="KW-0378">Hydrolase</keyword>
<keyword id="KW-0408">Iron</keyword>
<keyword id="KW-0479">Metal-binding</keyword>
<keyword id="KW-0648">Protein biosynthesis</keyword>
<keyword id="KW-1185">Reference proteome</keyword>
<accession>Q9XAQ2</accession>